<feature type="signal peptide" evidence="1">
    <location>
        <begin position="1"/>
        <end position="86"/>
    </location>
</feature>
<feature type="chain" id="PRO_0000038170" description="Envelope glycoprotein B">
    <location>
        <begin position="87"/>
        <end position="980"/>
    </location>
</feature>
<feature type="topological domain" description="Virion surface" evidence="2">
    <location>
        <begin position="87"/>
        <end position="849"/>
    </location>
</feature>
<feature type="transmembrane region" description="Helical" evidence="2">
    <location>
        <begin position="850"/>
        <end position="870"/>
    </location>
</feature>
<feature type="topological domain" description="Intravirion" evidence="2">
    <location>
        <begin position="871"/>
        <end position="980"/>
    </location>
</feature>
<feature type="region of interest" description="Disordered" evidence="3">
    <location>
        <begin position="1"/>
        <end position="20"/>
    </location>
</feature>
<feature type="region of interest" description="Disordered" evidence="3">
    <location>
        <begin position="88"/>
        <end position="118"/>
    </location>
</feature>
<feature type="region of interest" description="Involved in fusion and/or binding to host membrane" evidence="2">
    <location>
        <begin position="197"/>
        <end position="203"/>
    </location>
</feature>
<feature type="region of interest" description="Involved in fusion and/or binding to host membrane" evidence="2">
    <location>
        <begin position="282"/>
        <end position="290"/>
    </location>
</feature>
<feature type="region of interest" description="Disordered" evidence="3">
    <location>
        <begin position="505"/>
        <end position="535"/>
    </location>
</feature>
<feature type="region of interest" description="Hydrophobic membrane proximal region" evidence="2">
    <location>
        <begin position="794"/>
        <end position="847"/>
    </location>
</feature>
<feature type="region of interest" description="Hydrophobic membrane proximal region">
    <location>
        <begin position="823"/>
        <end position="843"/>
    </location>
</feature>
<feature type="short sequence motif" description="Golgi targeting" evidence="2">
    <location>
        <begin position="925"/>
        <end position="928"/>
    </location>
</feature>
<feature type="short sequence motif" description="Internalization motif" evidence="2">
    <location>
        <begin position="965"/>
        <end position="968"/>
    </location>
</feature>
<feature type="compositionally biased region" description="Polar residues" evidence="3">
    <location>
        <begin position="1"/>
        <end position="14"/>
    </location>
</feature>
<feature type="compositionally biased region" description="Low complexity" evidence="3">
    <location>
        <begin position="96"/>
        <end position="118"/>
    </location>
</feature>
<feature type="compositionally biased region" description="Low complexity" evidence="3">
    <location>
        <begin position="505"/>
        <end position="516"/>
    </location>
</feature>
<feature type="glycosylation site" description="N-linked (GlcNAc...) asparagine; by host" evidence="2">
    <location>
        <position position="165"/>
    </location>
</feature>
<feature type="glycosylation site" description="N-linked (GlcNAc...) asparagine; by host" evidence="2">
    <location>
        <position position="275"/>
    </location>
</feature>
<feature type="glycosylation site" description="N-linked (GlcNAc...) asparagine; by host" evidence="2">
    <location>
        <position position="380"/>
    </location>
</feature>
<feature type="glycosylation site" description="N-linked (GlcNAc...) asparagine; by host" evidence="2">
    <location>
        <position position="423"/>
    </location>
</feature>
<feature type="glycosylation site" description="N-linked (GlcNAc...) asparagine; by host" evidence="2">
    <location>
        <position position="497"/>
    </location>
</feature>
<feature type="glycosylation site" description="N-linked (GlcNAc...) asparagine; by host" evidence="2">
    <location>
        <position position="514"/>
    </location>
</feature>
<feature type="glycosylation site" description="N-linked (GlcNAc...) asparagine; by host" evidence="2">
    <location>
        <position position="515"/>
    </location>
</feature>
<feature type="glycosylation site" description="N-linked (GlcNAc...) asparagine; by host" evidence="2">
    <location>
        <position position="560"/>
    </location>
</feature>
<feature type="glycosylation site" description="N-linked (GlcNAc...) asparagine; by host" evidence="2">
    <location>
        <position position="727"/>
    </location>
</feature>
<feature type="glycosylation site" description="N-linked (GlcNAc...) asparagine; by host" evidence="2">
    <location>
        <position position="749"/>
    </location>
</feature>
<feature type="glycosylation site" description="N-linked (GlcNAc...) asparagine; by host" evidence="2">
    <location>
        <position position="952"/>
    </location>
</feature>
<feature type="glycosylation site" description="N-linked (GlcNAc...) asparagine; by host" evidence="2">
    <location>
        <position position="971"/>
    </location>
</feature>
<feature type="disulfide bond" evidence="2">
    <location>
        <begin position="140"/>
        <end position="647"/>
    </location>
</feature>
<feature type="disulfide bond" evidence="2">
    <location>
        <begin position="157"/>
        <end position="603"/>
    </location>
</feature>
<feature type="disulfide bond" evidence="2">
    <location>
        <begin position="231"/>
        <end position="296"/>
    </location>
</feature>
<feature type="disulfide bond" evidence="2">
    <location>
        <begin position="389"/>
        <end position="437"/>
    </location>
</feature>
<feature type="disulfide bond" evidence="2">
    <location>
        <begin position="668"/>
        <end position="708"/>
    </location>
</feature>
<reference key="1">
    <citation type="journal article" date="1989" name="J. Gen. Virol.">
        <title>Identification and nucleotide sequence of a gene in equine herpesvirus 1 analogous to the herpes simplex virus gene encoding the major envelope glycoprotein gB.</title>
        <authorList>
            <person name="Whalley J.M."/>
            <person name="Robertson G.R."/>
            <person name="Scott N.A."/>
            <person name="Hudson G.C."/>
            <person name="Bell C.W."/>
            <person name="Woodworth L.M."/>
        </authorList>
    </citation>
    <scope>NUCLEOTIDE SEQUENCE [GENOMIC DNA]</scope>
</reference>
<organism>
    <name type="scientific">Equine herpesvirus 1 (strain HVS25A)</name>
    <name type="common">EHV-1</name>
    <name type="synonym">Equine abortion virus</name>
    <dbReference type="NCBI Taxonomy" id="10327"/>
    <lineage>
        <taxon>Viruses</taxon>
        <taxon>Duplodnaviria</taxon>
        <taxon>Heunggongvirae</taxon>
        <taxon>Peploviricota</taxon>
        <taxon>Herviviricetes</taxon>
        <taxon>Herpesvirales</taxon>
        <taxon>Orthoherpesviridae</taxon>
        <taxon>Alphaherpesvirinae</taxon>
        <taxon>Varicellovirus</taxon>
        <taxon>Varicellovirus equidalpha1</taxon>
        <taxon>Equid alphaherpesvirus 1</taxon>
    </lineage>
</organism>
<organismHost>
    <name type="scientific">Equus caballus</name>
    <name type="common">Horse</name>
    <dbReference type="NCBI Taxonomy" id="9796"/>
</organismHost>
<dbReference type="EMBL" id="D00401">
    <property type="protein sequence ID" value="BAA00304.1"/>
    <property type="status" value="ALT_SEQ"/>
    <property type="molecule type" value="Genomic_DNA"/>
</dbReference>
<dbReference type="PIR" id="A31241">
    <property type="entry name" value="VGBE2H"/>
</dbReference>
<dbReference type="SMR" id="P18050"/>
<dbReference type="GlyCosmos" id="P18050">
    <property type="glycosylation" value="12 sites, No reported glycans"/>
</dbReference>
<dbReference type="KEGG" id="vg:1487545"/>
<dbReference type="GO" id="GO:0044175">
    <property type="term" value="C:host cell endosome membrane"/>
    <property type="evidence" value="ECO:0007669"/>
    <property type="project" value="UniProtKB-SubCell"/>
</dbReference>
<dbReference type="GO" id="GO:0044178">
    <property type="term" value="C:host cell Golgi membrane"/>
    <property type="evidence" value="ECO:0007669"/>
    <property type="project" value="UniProtKB-SubCell"/>
</dbReference>
<dbReference type="GO" id="GO:0020002">
    <property type="term" value="C:host cell plasma membrane"/>
    <property type="evidence" value="ECO:0007669"/>
    <property type="project" value="UniProtKB-SubCell"/>
</dbReference>
<dbReference type="GO" id="GO:0016020">
    <property type="term" value="C:membrane"/>
    <property type="evidence" value="ECO:0007669"/>
    <property type="project" value="UniProtKB-KW"/>
</dbReference>
<dbReference type="GO" id="GO:0019031">
    <property type="term" value="C:viral envelope"/>
    <property type="evidence" value="ECO:0007669"/>
    <property type="project" value="UniProtKB-KW"/>
</dbReference>
<dbReference type="GO" id="GO:0055036">
    <property type="term" value="C:virion membrane"/>
    <property type="evidence" value="ECO:0007669"/>
    <property type="project" value="UniProtKB-SubCell"/>
</dbReference>
<dbReference type="GO" id="GO:0046718">
    <property type="term" value="P:symbiont entry into host cell"/>
    <property type="evidence" value="ECO:0007669"/>
    <property type="project" value="UniProtKB-KW"/>
</dbReference>
<dbReference type="GO" id="GO:0019062">
    <property type="term" value="P:virion attachment to host cell"/>
    <property type="evidence" value="ECO:0007669"/>
    <property type="project" value="UniProtKB-KW"/>
</dbReference>
<dbReference type="Gene3D" id="1.20.5.1890">
    <property type="match status" value="1"/>
</dbReference>
<dbReference type="Gene3D" id="2.30.29.100">
    <property type="match status" value="1"/>
</dbReference>
<dbReference type="Gene3D" id="2.30.30.1230">
    <property type="match status" value="1"/>
</dbReference>
<dbReference type="Gene3D" id="6.10.250.3280">
    <property type="match status" value="1"/>
</dbReference>
<dbReference type="HAMAP" id="MF_04032">
    <property type="entry name" value="HSV_GB"/>
    <property type="match status" value="1"/>
</dbReference>
<dbReference type="InterPro" id="IPR035377">
    <property type="entry name" value="Glycoprot_B_PH1"/>
</dbReference>
<dbReference type="InterPro" id="IPR035381">
    <property type="entry name" value="Glycoprot_B_PH2"/>
</dbReference>
<dbReference type="InterPro" id="IPR038631">
    <property type="entry name" value="Glycoprot_B_PH2_sf"/>
</dbReference>
<dbReference type="InterPro" id="IPR055341">
    <property type="entry name" value="Glycoprotein_B_ecto_C"/>
</dbReference>
<dbReference type="InterPro" id="IPR000234">
    <property type="entry name" value="Herpes_Glycoprot_B"/>
</dbReference>
<dbReference type="Pfam" id="PF17416">
    <property type="entry name" value="Glycoprot_B_PH1"/>
    <property type="match status" value="1"/>
</dbReference>
<dbReference type="Pfam" id="PF17417">
    <property type="entry name" value="Glycoprot_B_PH2"/>
    <property type="match status" value="1"/>
</dbReference>
<dbReference type="Pfam" id="PF00606">
    <property type="entry name" value="Glycoprotein_B"/>
    <property type="match status" value="1"/>
</dbReference>
<dbReference type="SUPFAM" id="SSF161008">
    <property type="entry name" value="Viral glycoprotein ectodomain-like"/>
    <property type="match status" value="1"/>
</dbReference>
<sequence length="980" mass="109932">MSSGCRSVGGSTWGNWRGDGGDLRQRRVLSPVCSAPAAGSWIGSQLGNVGNLLATPHPLGKPASSRVGTIVLACLLLFGSCVVRAVPTTPSPPTSTPTSMSTHSHGTVDPTLLPTETPDPLRLAVRESGILAEDGDFYTCPPPTGSTVVRIEPPRTCPKFDLGRNFTEGIAVIFKENIAPYKFRANVYYKDIVVTRVWKGYSHTSLSDRYNDRVPVSVEEIFGLIDSKGKCSSKAEYLRDNIMHHAYHDDEDEVELDLCRPSLQLRGARAWQTTNDTTSYVGWMPWRHYTSTSVNCIVEEVEARSVYPYDSFALSTGDIVYASPFYGLRAAARIEHNSYAQERFRQVEGYRPRDLDSKLQAEEPVTKNFITTPHVTVSWNWTEKKVEACTLTKWKEVDELVRDEFRGSYRFTIRSISSTFISNTTQFKLESAPLTECVSKEAKEAIDSIYKKQYESTHVFSGDVEYYLARGGFLIAFRPMLSNELARLYLNELVRSNRTYDLKNLLNPNANNNNNTTRRRRSLLSVPEPQPTQDGVHREQILHRLHKRAVEATAGTDSSNVTAKQLELIKTTSSIEFAMLQFAYDHIQSHVNEMLSRIATAWCTLQNKERTLWNEMVKINPSAIVSATLDERVAARVLGDVIAITHCAKIEGNVYLQNSMRSMDSNTCYSRPPVTFTITKNANNRGSIEGQLGEENEIFTERKLIEPCALNQKRYFKFGKEYVYYENYTFVRKVPPTEIEVISTYVELNLTLLEDREFLPLEVYTRAELEDTGLLDYSEIQRRNQLHALRFYDIDSVVNVDNTAVIMQGIASFFKGLGKVGEAVGTLVLGAAGAVVSTVSGIASFLNNPFGGLAIGLLVIAGLVAAFFAYRYVMQIRSNPMKALYPITTKALKNKAKTSYGQNEEDDGSDFDEAKLEEAREMIKYMSMVSALEKQEKKAIKKNSGVGLIASNVSKLALRRRGPKYTRLQQNDTMENEKMV</sequence>
<evidence type="ECO:0000255" key="1"/>
<evidence type="ECO:0000255" key="2">
    <source>
        <dbReference type="HAMAP-Rule" id="MF_04032"/>
    </source>
</evidence>
<evidence type="ECO:0000256" key="3">
    <source>
        <dbReference type="SAM" id="MobiDB-lite"/>
    </source>
</evidence>
<evidence type="ECO:0000305" key="4"/>
<name>GB_EHV1</name>
<keyword id="KW-1015">Disulfide bond</keyword>
<keyword id="KW-0325">Glycoprotein</keyword>
<keyword id="KW-1032">Host cell membrane</keyword>
<keyword id="KW-1039">Host endosome</keyword>
<keyword id="KW-1040">Host Golgi apparatus</keyword>
<keyword id="KW-1043">Host membrane</keyword>
<keyword id="KW-0945">Host-virus interaction</keyword>
<keyword id="KW-0472">Membrane</keyword>
<keyword id="KW-0732">Signal</keyword>
<keyword id="KW-0812">Transmembrane</keyword>
<keyword id="KW-1133">Transmembrane helix</keyword>
<keyword id="KW-1161">Viral attachment to host cell</keyword>
<keyword id="KW-0261">Viral envelope protein</keyword>
<keyword id="KW-0946">Virion</keyword>
<keyword id="KW-1160">Virus entry into host cell</keyword>
<gene>
    <name evidence="2" type="primary">gB</name>
    <name type="synonym">GP14</name>
</gene>
<proteinExistence type="inferred from homology"/>
<comment type="function">
    <text evidence="2">Envelope glycoprotein that forms spikes at the surface of virion envelope. Essential for the initial attachment to heparan sulfate moieties of the host cell surface proteoglycans. Involved in fusion of viral and cellular membranes leading to virus entry into the host cell. Following initial binding to its host receptors, membrane fusion is mediated by the fusion machinery composed at least of gB and the heterodimer gH/gL. May be involved in the fusion between the virion envelope and the outer nuclear membrane during virion egress.</text>
</comment>
<comment type="subunit">
    <text evidence="2">Homotrimer; disulfide-linked. Binds to heparan sulfate proteoglycans. Interacts with gH/gL heterodimer.</text>
</comment>
<comment type="subcellular location">
    <subcellularLocation>
        <location evidence="2">Virion membrane</location>
        <topology evidence="2">Single-pass type I membrane protein</topology>
    </subcellularLocation>
    <subcellularLocation>
        <location evidence="2">Host cell membrane</location>
        <topology evidence="2">Single-pass type I membrane protein</topology>
    </subcellularLocation>
    <subcellularLocation>
        <location evidence="2">Host endosome membrane</location>
        <topology evidence="2">Single-pass type I membrane protein</topology>
    </subcellularLocation>
    <subcellularLocation>
        <location evidence="2">Host Golgi apparatus membrane</location>
        <topology evidence="2">Single-pass type I membrane protein</topology>
    </subcellularLocation>
    <text evidence="2">During virion morphogenesis, this protein probably accumulates in the endosomes and trans-Golgi where secondary envelopment occurs. It is probably transported to the cell surface from where it is endocytosed and directed to the trans-Golgi network (TGN).</text>
</comment>
<comment type="PTM">
    <text evidence="4">A proteolytic cleavage by host furin generates two subunits that remain linked by disulfide bonds.</text>
</comment>
<comment type="similarity">
    <text evidence="2">Belongs to the herpesviridae glycoprotein B family.</text>
</comment>
<accession>P18050</accession>
<protein>
    <recommendedName>
        <fullName evidence="2">Envelope glycoprotein B</fullName>
        <shortName evidence="2">gB</shortName>
    </recommendedName>
</protein>